<sequence length="465" mass="51243">MSSELMFNYTFSWPAGPKDVILTGTFDDWRGTLPLVKTAKGNFEITMPVKLXNKDDTFQFKFIVDGVWCVSDSYKKEHVSEGIENNFLQITDLVETQEVXGASRIPEAGGLLCGKPPRSAGPPSTSNRKKNKRNNKKRKSKLKKKSTKNNKKSNESXDDNEEEDXVTGTTTEDVTGTSREETPLAEPTNVSKEAPGNFHILPIDQSADTTQSNGIIGGPGPVLVPNPGEIKEFTEIRDVDARELNERLNKKEEVPEPVAGPIVESSVTEKSPALPQADDPIVETKEMAHNVQELTPQVEAVTPLINELEPLPTPEAQISIPESSKVEPVEGSLQSKLVEKRESTEGVSDGSKKVENKAKKDEEVFTLDPIVNKAPKLPLTDEQTAEGRKSPAVSEEKEKKKKQEKGSKEVKRSETSKEKKPSAKEVKKQTVKAPKKQTASPLSSSTEEPKKKKTGFFGKLKKLFK</sequence>
<keyword id="KW-0238">DNA-binding</keyword>
<keyword id="KW-0597">Phosphoprotein</keyword>
<accession>E7Q4T7</accession>
<organism>
    <name type="scientific">Saccharomyces cerevisiae (strain FostersB)</name>
    <name type="common">Baker's yeast</name>
    <dbReference type="NCBI Taxonomy" id="764102"/>
    <lineage>
        <taxon>Eukaryota</taxon>
        <taxon>Fungi</taxon>
        <taxon>Dikarya</taxon>
        <taxon>Ascomycota</taxon>
        <taxon>Saccharomycotina</taxon>
        <taxon>Saccharomycetes</taxon>
        <taxon>Saccharomycetales</taxon>
        <taxon>Saccharomycetaceae</taxon>
        <taxon>Saccharomyces</taxon>
    </lineage>
</organism>
<protein>
    <recommendedName>
        <fullName>Cruciform DNA-recognizing protein 1</fullName>
    </recommendedName>
    <component>
        <recommendedName>
            <fullName>CRP1 short N-terminal subpeptide</fullName>
        </recommendedName>
    </component>
    <component>
        <recommendedName>
            <fullName>CRP1 short C-terminal subpeptide</fullName>
        </recommendedName>
    </component>
</protein>
<reference key="1">
    <citation type="journal article" date="2011" name="PLoS Genet.">
        <title>Whole-genome comparison reveals novel genetic elements that characterize the genome of industrial strains of Saccharomyces cerevisiae.</title>
        <authorList>
            <person name="Borneman A.R."/>
            <person name="Desany B.A."/>
            <person name="Riches D."/>
            <person name="Affourtit J.P."/>
            <person name="Forgan A.H."/>
            <person name="Pretorius I.S."/>
            <person name="Egholm M."/>
            <person name="Chambers P.J."/>
        </authorList>
    </citation>
    <scope>NUCLEOTIDE SEQUENCE [LARGE SCALE GENOMIC DNA]</scope>
    <source>
        <strain>FostersB</strain>
    </source>
</reference>
<dbReference type="EMBL" id="AEHH01000032">
    <property type="protein sequence ID" value="EGA58389.1"/>
    <property type="molecule type" value="Genomic_DNA"/>
</dbReference>
<dbReference type="HOGENOM" id="CLU_594765_0_0_1"/>
<dbReference type="OrthoDB" id="5976022at2759"/>
<dbReference type="GO" id="GO:0005737">
    <property type="term" value="C:cytoplasm"/>
    <property type="evidence" value="ECO:0007669"/>
    <property type="project" value="TreeGrafter"/>
</dbReference>
<dbReference type="GO" id="GO:0031588">
    <property type="term" value="C:nucleotide-activated protein kinase complex"/>
    <property type="evidence" value="ECO:0007669"/>
    <property type="project" value="TreeGrafter"/>
</dbReference>
<dbReference type="GO" id="GO:0005634">
    <property type="term" value="C:nucleus"/>
    <property type="evidence" value="ECO:0007669"/>
    <property type="project" value="TreeGrafter"/>
</dbReference>
<dbReference type="GO" id="GO:0003677">
    <property type="term" value="F:DNA binding"/>
    <property type="evidence" value="ECO:0007669"/>
    <property type="project" value="UniProtKB-KW"/>
</dbReference>
<dbReference type="GO" id="GO:0019901">
    <property type="term" value="F:protein kinase binding"/>
    <property type="evidence" value="ECO:0007669"/>
    <property type="project" value="TreeGrafter"/>
</dbReference>
<dbReference type="GO" id="GO:0007165">
    <property type="term" value="P:signal transduction"/>
    <property type="evidence" value="ECO:0007669"/>
    <property type="project" value="TreeGrafter"/>
</dbReference>
<dbReference type="CDD" id="cd02859">
    <property type="entry name" value="E_set_AMPKbeta_like_N"/>
    <property type="match status" value="1"/>
</dbReference>
<dbReference type="FunFam" id="2.60.40.10:FF:001765">
    <property type="entry name" value="Cruciform DNA-recognizing protein 1"/>
    <property type="match status" value="1"/>
</dbReference>
<dbReference type="Gene3D" id="2.60.40.10">
    <property type="entry name" value="Immunoglobulins"/>
    <property type="match status" value="1"/>
</dbReference>
<dbReference type="InterPro" id="IPR032640">
    <property type="entry name" value="AMPK1_CBM"/>
</dbReference>
<dbReference type="InterPro" id="IPR050827">
    <property type="entry name" value="CRP1_MDG1_kinase"/>
</dbReference>
<dbReference type="InterPro" id="IPR013783">
    <property type="entry name" value="Ig-like_fold"/>
</dbReference>
<dbReference type="InterPro" id="IPR014756">
    <property type="entry name" value="Ig_E-set"/>
</dbReference>
<dbReference type="PANTHER" id="PTHR10343">
    <property type="entry name" value="5'-AMP-ACTIVATED PROTEIN KINASE , BETA SUBUNIT"/>
    <property type="match status" value="1"/>
</dbReference>
<dbReference type="PANTHER" id="PTHR10343:SF81">
    <property type="entry name" value="CRUCIFORM DNA-RECOGNIZING PROTEIN 1-RELATED"/>
    <property type="match status" value="1"/>
</dbReference>
<dbReference type="Pfam" id="PF16561">
    <property type="entry name" value="AMPK1_CBM"/>
    <property type="match status" value="1"/>
</dbReference>
<dbReference type="SUPFAM" id="SSF81296">
    <property type="entry name" value="E set domains"/>
    <property type="match status" value="1"/>
</dbReference>
<feature type="chain" id="PRO_0000409611" description="Cruciform DNA-recognizing protein 1">
    <location>
        <begin position="1"/>
        <end position="465"/>
    </location>
</feature>
<feature type="chain" id="PRO_0000409612" description="CRP1 short N-terminal subpeptide" evidence="1">
    <location>
        <begin position="1"/>
        <end position="160"/>
    </location>
</feature>
<feature type="chain" id="PRO_0000409613" description="CRP1 short C-terminal subpeptide" evidence="1">
    <location>
        <begin position="161"/>
        <end position="465"/>
    </location>
</feature>
<feature type="region of interest" description="Disordered" evidence="3">
    <location>
        <begin position="107"/>
        <end position="227"/>
    </location>
</feature>
<feature type="region of interest" description="X-DNA-binding" evidence="1">
    <location>
        <begin position="160"/>
        <end position="161"/>
    </location>
</feature>
<feature type="region of interest" description="Disordered" evidence="3">
    <location>
        <begin position="247"/>
        <end position="275"/>
    </location>
</feature>
<feature type="region of interest" description="Disordered" evidence="3">
    <location>
        <begin position="312"/>
        <end position="465"/>
    </location>
</feature>
<feature type="compositionally biased region" description="Basic residues" evidence="3">
    <location>
        <begin position="127"/>
        <end position="151"/>
    </location>
</feature>
<feature type="compositionally biased region" description="Acidic residues" evidence="3">
    <location>
        <begin position="156"/>
        <end position="165"/>
    </location>
</feature>
<feature type="compositionally biased region" description="Low complexity" evidence="3">
    <location>
        <begin position="166"/>
        <end position="177"/>
    </location>
</feature>
<feature type="compositionally biased region" description="Basic and acidic residues" evidence="3">
    <location>
        <begin position="337"/>
        <end position="363"/>
    </location>
</feature>
<feature type="compositionally biased region" description="Basic and acidic residues" evidence="3">
    <location>
        <begin position="385"/>
        <end position="398"/>
    </location>
</feature>
<feature type="compositionally biased region" description="Basic and acidic residues" evidence="3">
    <location>
        <begin position="404"/>
        <end position="428"/>
    </location>
</feature>
<feature type="compositionally biased region" description="Basic residues" evidence="3">
    <location>
        <begin position="451"/>
        <end position="465"/>
    </location>
</feature>
<feature type="modified residue" description="Phosphoserine" evidence="2">
    <location>
        <position position="153"/>
    </location>
</feature>
<feature type="modified residue" description="Phosphoserine" evidence="2">
    <location>
        <position position="156"/>
    </location>
</feature>
<feature type="modified residue" description="Phosphothreonine" evidence="2">
    <location>
        <position position="182"/>
    </location>
</feature>
<feature type="modified residue" description="Phosphoserine" evidence="2">
    <location>
        <position position="271"/>
    </location>
</feature>
<feature type="modified residue" description="Phosphothreonine" evidence="2">
    <location>
        <position position="295"/>
    </location>
</feature>
<feature type="modified residue" description="Phosphoserine" evidence="2">
    <location>
        <position position="319"/>
    </location>
</feature>
<feature type="modified residue" description="Phosphoserine" evidence="2">
    <location>
        <position position="343"/>
    </location>
</feature>
<feature type="modified residue" description="Phosphothreonine" evidence="2">
    <location>
        <position position="366"/>
    </location>
</feature>
<feature type="modified residue" description="Phosphoserine" evidence="2">
    <location>
        <position position="394"/>
    </location>
</feature>
<feature type="modified residue" description="Phosphoserine" evidence="2">
    <location>
        <position position="440"/>
    </location>
</feature>
<comment type="function">
    <text evidence="1">Cruciform DNA-binding protein which exerts an enhancing effect on the cleavage of cruciform DNA (X-DNA) by endonuclease VII from bacteriophage T4.</text>
</comment>
<comment type="PTM">
    <text evidence="1">Cleaved in the vicinity of position 160 to give an X-DNA-binding N-terminal subpeptide and a non-DNA-binding C-terminal subpeptide.</text>
</comment>
<comment type="similarity">
    <text evidence="4">Belongs to the CRP1/MDG1 family.</text>
</comment>
<gene>
    <name type="primary">CRP1</name>
    <name type="ORF">FOSTERSB_2171</name>
</gene>
<evidence type="ECO:0000250" key="1"/>
<evidence type="ECO:0000250" key="2">
    <source>
        <dbReference type="UniProtKB" id="P38845"/>
    </source>
</evidence>
<evidence type="ECO:0000256" key="3">
    <source>
        <dbReference type="SAM" id="MobiDB-lite"/>
    </source>
</evidence>
<evidence type="ECO:0000305" key="4"/>
<name>CRP1_YEASB</name>
<proteinExistence type="inferred from homology"/>